<reference key="1">
    <citation type="journal article" date="2001" name="Nature">
        <title>Complete genome sequence of Salmonella enterica serovar Typhimurium LT2.</title>
        <authorList>
            <person name="McClelland M."/>
            <person name="Sanderson K.E."/>
            <person name="Spieth J."/>
            <person name="Clifton S.W."/>
            <person name="Latreille P."/>
            <person name="Courtney L."/>
            <person name="Porwollik S."/>
            <person name="Ali J."/>
            <person name="Dante M."/>
            <person name="Du F."/>
            <person name="Hou S."/>
            <person name="Layman D."/>
            <person name="Leonard S."/>
            <person name="Nguyen C."/>
            <person name="Scott K."/>
            <person name="Holmes A."/>
            <person name="Grewal N."/>
            <person name="Mulvaney E."/>
            <person name="Ryan E."/>
            <person name="Sun H."/>
            <person name="Florea L."/>
            <person name="Miller W."/>
            <person name="Stoneking T."/>
            <person name="Nhan M."/>
            <person name="Waterston R."/>
            <person name="Wilson R.K."/>
        </authorList>
    </citation>
    <scope>NUCLEOTIDE SEQUENCE [LARGE SCALE GENOMIC DNA]</scope>
    <source>
        <strain>LT2 / SGSC1412 / ATCC 700720</strain>
    </source>
</reference>
<comment type="similarity">
    <text evidence="2">Belongs to the IagB/IpgF/P19 family.</text>
</comment>
<organism>
    <name type="scientific">Salmonella typhimurium (strain LT2 / SGSC1412 / ATCC 700720)</name>
    <dbReference type="NCBI Taxonomy" id="99287"/>
    <lineage>
        <taxon>Bacteria</taxon>
        <taxon>Pseudomonadati</taxon>
        <taxon>Pseudomonadota</taxon>
        <taxon>Gammaproteobacteria</taxon>
        <taxon>Enterobacterales</taxon>
        <taxon>Enterobacteriaceae</taxon>
        <taxon>Salmonella</taxon>
    </lineage>
</organism>
<sequence length="160" mass="18285">MHYFFIIVIWLLSINTAWADCWLQAEKMFNIESELLYAIAQQESAMKPGAIGHNRDGSTDLGLMQINSFHMKRLKKMGISEKQLLQDPCISVIVGASILSDMMKIYGYSWEAVGAYNAGTSPKRSDIRKRYAKKIWENYRKLKGMSAEEKNKRLSIAANK</sequence>
<keyword id="KW-1185">Reference proteome</keyword>
<keyword id="KW-0732">Signal</keyword>
<keyword id="KW-0843">Virulence</keyword>
<gene>
    <name type="primary">iagB</name>
    <name type="ordered locus">STM2877</name>
</gene>
<feature type="signal peptide" evidence="1">
    <location>
        <begin position="1"/>
        <end position="19"/>
    </location>
</feature>
<feature type="chain" id="PRO_0000021478" description="Invasion protein IagB">
    <location>
        <begin position="20"/>
        <end position="160"/>
    </location>
</feature>
<accession>P0CL15</accession>
<accession>P43017</accession>
<evidence type="ECO:0000255" key="1"/>
<evidence type="ECO:0000305" key="2"/>
<dbReference type="EMBL" id="AE006468">
    <property type="protein sequence ID" value="AAL21757.1"/>
    <property type="molecule type" value="Genomic_DNA"/>
</dbReference>
<dbReference type="RefSeq" id="NP_461798.1">
    <property type="nucleotide sequence ID" value="NC_003197.2"/>
</dbReference>
<dbReference type="RefSeq" id="WP_000558928.1">
    <property type="nucleotide sequence ID" value="NC_003197.2"/>
</dbReference>
<dbReference type="SMR" id="P0CL15"/>
<dbReference type="STRING" id="99287.STM2877"/>
<dbReference type="CAZy" id="GH23">
    <property type="family name" value="Glycoside Hydrolase Family 23"/>
</dbReference>
<dbReference type="PaxDb" id="99287-STM2877"/>
<dbReference type="GeneID" id="1254400"/>
<dbReference type="KEGG" id="stm:STM2877"/>
<dbReference type="PATRIC" id="fig|99287.12.peg.3033"/>
<dbReference type="HOGENOM" id="CLU_094905_1_0_6"/>
<dbReference type="OMA" id="EPCTSIM"/>
<dbReference type="PhylomeDB" id="P0CL15"/>
<dbReference type="BioCyc" id="SENT99287:STM2877-MONOMER"/>
<dbReference type="Proteomes" id="UP000001014">
    <property type="component" value="Chromosome"/>
</dbReference>
<dbReference type="CDD" id="cd13400">
    <property type="entry name" value="LT_IagB-like"/>
    <property type="match status" value="1"/>
</dbReference>
<dbReference type="Gene3D" id="1.10.530.10">
    <property type="match status" value="1"/>
</dbReference>
<dbReference type="InterPro" id="IPR023346">
    <property type="entry name" value="Lysozyme-like_dom_sf"/>
</dbReference>
<dbReference type="InterPro" id="IPR008258">
    <property type="entry name" value="Transglycosylase_SLT_dom_1"/>
</dbReference>
<dbReference type="NCBIfam" id="NF011856">
    <property type="entry name" value="PRK15328.1"/>
    <property type="match status" value="1"/>
</dbReference>
<dbReference type="Pfam" id="PF01464">
    <property type="entry name" value="SLT"/>
    <property type="match status" value="1"/>
</dbReference>
<dbReference type="SUPFAM" id="SSF53955">
    <property type="entry name" value="Lysozyme-like"/>
    <property type="match status" value="1"/>
</dbReference>
<proteinExistence type="inferred from homology"/>
<name>IAGB_SALTY</name>
<protein>
    <recommendedName>
        <fullName>Invasion protein IagB</fullName>
    </recommendedName>
</protein>